<sequence>MSRMAEQQLYIHGGYTSATSGRTFETINPANGNVLATVQAAGREDVDRAVKSAQQGQKIWAAMTAMERSRILRRAVDILRERNDELAKLETLDTGKAYSETSTVDIVTGADVLEYYAGLIPSLEGSQIPLRETSFVYTRREPLGVVAGIGAWNYPIQIALWKSAPALAAGNAMIFKPSEVTPLTALKLAEIYSEAGLPDGVFNVLPGVGAETGQYLTEHPGIAKVSFTGGVASGKKVMANSAASSLKEVTMELGGKSPLIVFDDADLDLAADIAMMANFFSSGQVCTNGTRVFVPAKCNAAFEQKILARVERIRAGDVFDPQTNFGPLVSFPHRDNVLRYIAKGKEEGARVLCGGDVLKGDGLDNGAWVAPTVFTDCSDEMTIVREEIFGPVMSILTYESEDEVIRRANDTDYGLAAGIVTADLNRAHRVIHQLEAGICWINTWGESPAEMPVGGYKHSGIGRENGVMTLQSYTQVKSIQVEMAKFQSIF</sequence>
<organism>
    <name type="scientific">Escherichia coli O157:H7 (strain EC4115 / EHEC)</name>
    <dbReference type="NCBI Taxonomy" id="444450"/>
    <lineage>
        <taxon>Bacteria</taxon>
        <taxon>Pseudomonadati</taxon>
        <taxon>Pseudomonadota</taxon>
        <taxon>Gammaproteobacteria</taxon>
        <taxon>Enterobacterales</taxon>
        <taxon>Enterobacteriaceae</taxon>
        <taxon>Escherichia</taxon>
    </lineage>
</organism>
<name>BETB_ECO5E</name>
<dbReference type="EC" id="1.2.1.8" evidence="1"/>
<dbReference type="EMBL" id="CP001164">
    <property type="protein sequence ID" value="ACI39840.1"/>
    <property type="molecule type" value="Genomic_DNA"/>
</dbReference>
<dbReference type="RefSeq" id="WP_000089099.1">
    <property type="nucleotide sequence ID" value="NC_011353.1"/>
</dbReference>
<dbReference type="SMR" id="B5Z1R1"/>
<dbReference type="KEGG" id="ecf:ECH74115_0374"/>
<dbReference type="HOGENOM" id="CLU_005391_0_0_6"/>
<dbReference type="UniPathway" id="UPA00529">
    <property type="reaction ID" value="UER00386"/>
</dbReference>
<dbReference type="GO" id="GO:0008802">
    <property type="term" value="F:betaine-aldehyde dehydrogenase (NAD+) activity"/>
    <property type="evidence" value="ECO:0007669"/>
    <property type="project" value="UniProtKB-UniRule"/>
</dbReference>
<dbReference type="GO" id="GO:0046872">
    <property type="term" value="F:metal ion binding"/>
    <property type="evidence" value="ECO:0007669"/>
    <property type="project" value="UniProtKB-KW"/>
</dbReference>
<dbReference type="GO" id="GO:0019285">
    <property type="term" value="P:glycine betaine biosynthetic process from choline"/>
    <property type="evidence" value="ECO:0007669"/>
    <property type="project" value="UniProtKB-UniRule"/>
</dbReference>
<dbReference type="CDD" id="cd07090">
    <property type="entry name" value="ALDH_F9_TMBADH"/>
    <property type="match status" value="1"/>
</dbReference>
<dbReference type="FunFam" id="3.40.309.10:FF:000014">
    <property type="entry name" value="NAD/NADP-dependent betaine aldehyde dehydrogenase"/>
    <property type="match status" value="1"/>
</dbReference>
<dbReference type="FunFam" id="3.40.605.10:FF:000007">
    <property type="entry name" value="NAD/NADP-dependent betaine aldehyde dehydrogenase"/>
    <property type="match status" value="1"/>
</dbReference>
<dbReference type="Gene3D" id="3.40.605.10">
    <property type="entry name" value="Aldehyde Dehydrogenase, Chain A, domain 1"/>
    <property type="match status" value="1"/>
</dbReference>
<dbReference type="Gene3D" id="3.40.309.10">
    <property type="entry name" value="Aldehyde Dehydrogenase, Chain A, domain 2"/>
    <property type="match status" value="1"/>
</dbReference>
<dbReference type="HAMAP" id="MF_00804">
    <property type="entry name" value="BADH"/>
    <property type="match status" value="1"/>
</dbReference>
<dbReference type="InterPro" id="IPR016161">
    <property type="entry name" value="Ald_DH/histidinol_DH"/>
</dbReference>
<dbReference type="InterPro" id="IPR016163">
    <property type="entry name" value="Ald_DH_C"/>
</dbReference>
<dbReference type="InterPro" id="IPR016160">
    <property type="entry name" value="Ald_DH_CS_CYS"/>
</dbReference>
<dbReference type="InterPro" id="IPR029510">
    <property type="entry name" value="Ald_DH_CS_GLU"/>
</dbReference>
<dbReference type="InterPro" id="IPR016162">
    <property type="entry name" value="Ald_DH_N"/>
</dbReference>
<dbReference type="InterPro" id="IPR015590">
    <property type="entry name" value="Aldehyde_DH_dom"/>
</dbReference>
<dbReference type="InterPro" id="IPR011264">
    <property type="entry name" value="BADH"/>
</dbReference>
<dbReference type="NCBIfam" id="TIGR01804">
    <property type="entry name" value="BADH"/>
    <property type="match status" value="1"/>
</dbReference>
<dbReference type="NCBIfam" id="NF009725">
    <property type="entry name" value="PRK13252.1"/>
    <property type="match status" value="1"/>
</dbReference>
<dbReference type="PANTHER" id="PTHR11699">
    <property type="entry name" value="ALDEHYDE DEHYDROGENASE-RELATED"/>
    <property type="match status" value="1"/>
</dbReference>
<dbReference type="Pfam" id="PF00171">
    <property type="entry name" value="Aldedh"/>
    <property type="match status" value="1"/>
</dbReference>
<dbReference type="SUPFAM" id="SSF53720">
    <property type="entry name" value="ALDH-like"/>
    <property type="match status" value="1"/>
</dbReference>
<dbReference type="PROSITE" id="PS00070">
    <property type="entry name" value="ALDEHYDE_DEHYDR_CYS"/>
    <property type="match status" value="1"/>
</dbReference>
<dbReference type="PROSITE" id="PS00687">
    <property type="entry name" value="ALDEHYDE_DEHYDR_GLU"/>
    <property type="match status" value="1"/>
</dbReference>
<reference key="1">
    <citation type="journal article" date="2011" name="Proc. Natl. Acad. Sci. U.S.A.">
        <title>Genomic anatomy of Escherichia coli O157:H7 outbreaks.</title>
        <authorList>
            <person name="Eppinger M."/>
            <person name="Mammel M.K."/>
            <person name="Leclerc J.E."/>
            <person name="Ravel J."/>
            <person name="Cebula T.A."/>
        </authorList>
    </citation>
    <scope>NUCLEOTIDE SEQUENCE [LARGE SCALE GENOMIC DNA]</scope>
    <source>
        <strain>EC4115 / EHEC</strain>
    </source>
</reference>
<gene>
    <name evidence="1" type="primary">betB</name>
    <name type="ordered locus">ECH74115_0374</name>
</gene>
<evidence type="ECO:0000255" key="1">
    <source>
        <dbReference type="HAMAP-Rule" id="MF_00804"/>
    </source>
</evidence>
<feature type="chain" id="PRO_1000133947" description="Betaine aldehyde dehydrogenase">
    <location>
        <begin position="1"/>
        <end position="490"/>
    </location>
</feature>
<feature type="active site" description="Charge relay system" evidence="1">
    <location>
        <position position="162"/>
    </location>
</feature>
<feature type="active site" description="Proton acceptor" evidence="1">
    <location>
        <position position="252"/>
    </location>
</feature>
<feature type="active site" description="Nucleophile" evidence="1">
    <location>
        <position position="286"/>
    </location>
</feature>
<feature type="active site" description="Charge relay system" evidence="1">
    <location>
        <position position="464"/>
    </location>
</feature>
<feature type="binding site" evidence="1">
    <location>
        <position position="26"/>
    </location>
    <ligand>
        <name>K(+)</name>
        <dbReference type="ChEBI" id="CHEBI:29103"/>
        <label>1</label>
    </ligand>
</feature>
<feature type="binding site" evidence="1">
    <location>
        <position position="27"/>
    </location>
    <ligand>
        <name>K(+)</name>
        <dbReference type="ChEBI" id="CHEBI:29103"/>
        <label>1</label>
    </ligand>
</feature>
<feature type="binding site" evidence="1">
    <location>
        <position position="93"/>
    </location>
    <ligand>
        <name>K(+)</name>
        <dbReference type="ChEBI" id="CHEBI:29103"/>
        <label>1</label>
    </ligand>
</feature>
<feature type="binding site" evidence="1">
    <location>
        <begin position="150"/>
        <end position="152"/>
    </location>
    <ligand>
        <name>NAD(+)</name>
        <dbReference type="ChEBI" id="CHEBI:57540"/>
    </ligand>
</feature>
<feature type="binding site" evidence="1">
    <location>
        <begin position="176"/>
        <end position="179"/>
    </location>
    <ligand>
        <name>NAD(+)</name>
        <dbReference type="ChEBI" id="CHEBI:57540"/>
    </ligand>
</feature>
<feature type="binding site" evidence="1">
    <location>
        <position position="180"/>
    </location>
    <ligand>
        <name>K(+)</name>
        <dbReference type="ChEBI" id="CHEBI:29103"/>
        <label>1</label>
    </ligand>
</feature>
<feature type="binding site" evidence="1">
    <location>
        <begin position="230"/>
        <end position="233"/>
    </location>
    <ligand>
        <name>NAD(+)</name>
        <dbReference type="ChEBI" id="CHEBI:57540"/>
    </ligand>
</feature>
<feature type="binding site" evidence="1">
    <location>
        <position position="246"/>
    </location>
    <ligand>
        <name>K(+)</name>
        <dbReference type="ChEBI" id="CHEBI:29103"/>
        <label>2</label>
    </ligand>
</feature>
<feature type="binding site" evidence="1">
    <location>
        <position position="254"/>
    </location>
    <ligand>
        <name>NAD(+)</name>
        <dbReference type="ChEBI" id="CHEBI:57540"/>
    </ligand>
</feature>
<feature type="binding site" description="covalent" evidence="1">
    <location>
        <position position="286"/>
    </location>
    <ligand>
        <name>NAD(+)</name>
        <dbReference type="ChEBI" id="CHEBI:57540"/>
    </ligand>
</feature>
<feature type="binding site" evidence="1">
    <location>
        <position position="387"/>
    </location>
    <ligand>
        <name>NAD(+)</name>
        <dbReference type="ChEBI" id="CHEBI:57540"/>
    </ligand>
</feature>
<feature type="binding site" evidence="1">
    <location>
        <position position="457"/>
    </location>
    <ligand>
        <name>K(+)</name>
        <dbReference type="ChEBI" id="CHEBI:29103"/>
        <label>2</label>
    </ligand>
</feature>
<feature type="binding site" evidence="1">
    <location>
        <position position="460"/>
    </location>
    <ligand>
        <name>K(+)</name>
        <dbReference type="ChEBI" id="CHEBI:29103"/>
        <label>2</label>
    </ligand>
</feature>
<feature type="site" description="Seems to be a necessary countercharge to the potassium cations" evidence="1">
    <location>
        <position position="248"/>
    </location>
</feature>
<feature type="modified residue" description="Cysteine sulfenic acid (-SOH)" evidence="1">
    <location>
        <position position="286"/>
    </location>
</feature>
<accession>B5Z1R1</accession>
<comment type="function">
    <text evidence="1">Involved in the biosynthesis of the osmoprotectant glycine betaine. Catalyzes the irreversible oxidation of betaine aldehyde to the corresponding acid.</text>
</comment>
<comment type="catalytic activity">
    <reaction evidence="1">
        <text>betaine aldehyde + NAD(+) + H2O = glycine betaine + NADH + 2 H(+)</text>
        <dbReference type="Rhea" id="RHEA:15305"/>
        <dbReference type="ChEBI" id="CHEBI:15377"/>
        <dbReference type="ChEBI" id="CHEBI:15378"/>
        <dbReference type="ChEBI" id="CHEBI:15710"/>
        <dbReference type="ChEBI" id="CHEBI:17750"/>
        <dbReference type="ChEBI" id="CHEBI:57540"/>
        <dbReference type="ChEBI" id="CHEBI:57945"/>
        <dbReference type="EC" id="1.2.1.8"/>
    </reaction>
    <physiologicalReaction direction="left-to-right" evidence="1">
        <dbReference type="Rhea" id="RHEA:15306"/>
    </physiologicalReaction>
</comment>
<comment type="cofactor">
    <cofactor evidence="1">
        <name>K(+)</name>
        <dbReference type="ChEBI" id="CHEBI:29103"/>
    </cofactor>
    <text evidence="1">Binds 2 potassium ions per subunit.</text>
</comment>
<comment type="pathway">
    <text evidence="1">Amine and polyamine biosynthesis; betaine biosynthesis via choline pathway; betaine from betaine aldehyde: step 1/1.</text>
</comment>
<comment type="subunit">
    <text evidence="1">Dimer of dimers.</text>
</comment>
<comment type="similarity">
    <text evidence="1">Belongs to the aldehyde dehydrogenase family.</text>
</comment>
<proteinExistence type="inferred from homology"/>
<keyword id="KW-0479">Metal-binding</keyword>
<keyword id="KW-0520">NAD</keyword>
<keyword id="KW-0521">NADP</keyword>
<keyword id="KW-0558">Oxidation</keyword>
<keyword id="KW-0560">Oxidoreductase</keyword>
<keyword id="KW-0630">Potassium</keyword>
<protein>
    <recommendedName>
        <fullName evidence="1">Betaine aldehyde dehydrogenase</fullName>
        <shortName evidence="1">BADH</shortName>
        <ecNumber evidence="1">1.2.1.8</ecNumber>
    </recommendedName>
</protein>